<comment type="function">
    <text evidence="1">Binds double-stranded DNA tightly but without sequence specificity. Involved in DNA compaction.</text>
</comment>
<comment type="subcellular location">
    <subcellularLocation>
        <location evidence="1">Cytoplasm</location>
    </subcellularLocation>
    <subcellularLocation>
        <location evidence="1">Chromosome</location>
    </subcellularLocation>
</comment>
<comment type="similarity">
    <text evidence="1">Belongs to the histone-like Alba family.</text>
</comment>
<proteinExistence type="inferred from homology"/>
<dbReference type="EMBL" id="AM114193">
    <property type="protein sequence ID" value="CAJ37541.1"/>
    <property type="molecule type" value="Genomic_DNA"/>
</dbReference>
<dbReference type="RefSeq" id="WP_012035041.1">
    <property type="nucleotide sequence ID" value="NC_009464.1"/>
</dbReference>
<dbReference type="SMR" id="Q0W252"/>
<dbReference type="STRING" id="351160.RCIX2461"/>
<dbReference type="GeneID" id="5144702"/>
<dbReference type="KEGG" id="rci:RCIX2461"/>
<dbReference type="PATRIC" id="fig|351160.9.peg.745"/>
<dbReference type="eggNOG" id="arCOG01753">
    <property type="taxonomic scope" value="Archaea"/>
</dbReference>
<dbReference type="OrthoDB" id="10360at2157"/>
<dbReference type="Proteomes" id="UP000000663">
    <property type="component" value="Chromosome"/>
</dbReference>
<dbReference type="GO" id="GO:0005694">
    <property type="term" value="C:chromosome"/>
    <property type="evidence" value="ECO:0007669"/>
    <property type="project" value="UniProtKB-SubCell"/>
</dbReference>
<dbReference type="GO" id="GO:0005737">
    <property type="term" value="C:cytoplasm"/>
    <property type="evidence" value="ECO:0007669"/>
    <property type="project" value="UniProtKB-SubCell"/>
</dbReference>
<dbReference type="GO" id="GO:0003690">
    <property type="term" value="F:double-stranded DNA binding"/>
    <property type="evidence" value="ECO:0007669"/>
    <property type="project" value="UniProtKB-UniRule"/>
</dbReference>
<dbReference type="GO" id="GO:0003723">
    <property type="term" value="F:RNA binding"/>
    <property type="evidence" value="ECO:0007669"/>
    <property type="project" value="InterPro"/>
</dbReference>
<dbReference type="GO" id="GO:0030261">
    <property type="term" value="P:chromosome condensation"/>
    <property type="evidence" value="ECO:0007669"/>
    <property type="project" value="UniProtKB-KW"/>
</dbReference>
<dbReference type="Gene3D" id="3.30.110.20">
    <property type="entry name" value="Alba-like domain"/>
    <property type="match status" value="1"/>
</dbReference>
<dbReference type="HAMAP" id="MF_01122">
    <property type="entry name" value="AlbA"/>
    <property type="match status" value="1"/>
</dbReference>
<dbReference type="InterPro" id="IPR036882">
    <property type="entry name" value="Alba-like_dom_sf"/>
</dbReference>
<dbReference type="InterPro" id="IPR013795">
    <property type="entry name" value="DNA/RNA-bd_Alba"/>
</dbReference>
<dbReference type="InterPro" id="IPR002775">
    <property type="entry name" value="DNA/RNA-bd_Alba-like"/>
</dbReference>
<dbReference type="NCBIfam" id="TIGR00285">
    <property type="entry name" value="DNA-binding protein Alba"/>
    <property type="match status" value="1"/>
</dbReference>
<dbReference type="NCBIfam" id="NF003088">
    <property type="entry name" value="PRK04015.1"/>
    <property type="match status" value="1"/>
</dbReference>
<dbReference type="Pfam" id="PF01918">
    <property type="entry name" value="Alba"/>
    <property type="match status" value="1"/>
</dbReference>
<dbReference type="PIRSF" id="PIRSF028732">
    <property type="entry name" value="Alba"/>
    <property type="match status" value="1"/>
</dbReference>
<dbReference type="SUPFAM" id="SSF82704">
    <property type="entry name" value="AlbA-like"/>
    <property type="match status" value="1"/>
</dbReference>
<reference key="1">
    <citation type="journal article" date="2006" name="Science">
        <title>Genome of rice cluster I archaea -- the key methane producers in the rice rhizosphere.</title>
        <authorList>
            <person name="Erkel C."/>
            <person name="Kube M."/>
            <person name="Reinhardt R."/>
            <person name="Liesack W."/>
        </authorList>
    </citation>
    <scope>NUCLEOTIDE SEQUENCE [LARGE SCALE GENOMIC DNA]</scope>
    <source>
        <strain>DSM 22066 / NBRC 105507 / MRE50</strain>
    </source>
</reference>
<organism>
    <name type="scientific">Methanocella arvoryzae (strain DSM 22066 / NBRC 105507 / MRE50)</name>
    <dbReference type="NCBI Taxonomy" id="351160"/>
    <lineage>
        <taxon>Archaea</taxon>
        <taxon>Methanobacteriati</taxon>
        <taxon>Methanobacteriota</taxon>
        <taxon>Stenosarchaea group</taxon>
        <taxon>Methanomicrobia</taxon>
        <taxon>Methanocellales</taxon>
        <taxon>Methanocellaceae</taxon>
        <taxon>Methanocella</taxon>
    </lineage>
</organism>
<accession>Q0W252</accession>
<protein>
    <recommendedName>
        <fullName evidence="1">DNA/RNA-binding protein Alba</fullName>
    </recommendedName>
</protein>
<sequence length="96" mass="10715">MPEDNVIFVGNKPVMNYVLAAVTQFNEGAKEVTIKARGRAISRAVDTAEVVRHRFLTDVEIDRIQISTEELASEKGEKINVSSIEIFLKRPRAATD</sequence>
<feature type="chain" id="PRO_1000073042" description="DNA/RNA-binding protein Alba">
    <location>
        <begin position="1"/>
        <end position="96"/>
    </location>
</feature>
<name>ALBA_METAR</name>
<gene>
    <name evidence="1" type="primary">albA</name>
    <name type="ordered locus">UNCMA_07120</name>
    <name type="ORF">RCIX2461</name>
</gene>
<evidence type="ECO:0000255" key="1">
    <source>
        <dbReference type="HAMAP-Rule" id="MF_01122"/>
    </source>
</evidence>
<keyword id="KW-0158">Chromosome</keyword>
<keyword id="KW-0963">Cytoplasm</keyword>
<keyword id="KW-0226">DNA condensation</keyword>
<keyword id="KW-0238">DNA-binding</keyword>
<keyword id="KW-1185">Reference proteome</keyword>